<sequence length="1170" mass="129574">MLEGPILAVSRQTSSVAGIPGASTRYSFAKIDAPIEVPGLLDLQRESFAWLVGAPEWRARMQAEAGEGVRVTSGLEDILEELSPIEDYSENMSLTLSEPRFDDMKTSIDEAKEKDINYAAPLYVTAEFTNAQSGEIKSQTVFIGDFPMMTDKGTFIINGTERVVVSQLVRSPGVYFDESIDTSTERPLHGVKVIPSRGAWLEFDVDKRDTVGVRIDRKRRQPVTVLLKALGLTTQEITDRFGFSEIMMSTLEKDGVENTDEALLEIYRKQRPGESPTRDSAQALLENSFFRPKRYDLAKVGRYKVNRKLGLGGDTDGTMTLTEEDILTTIEYLVRLHAGERTMTSPEGVEIPIEVDDIDHFGNRRLRTVGELIQNQVRVGLSRMERVVRERMTTQDAESITPTSLINVRPVSAAIREFFGTSQLSQFMDQNNSLSGLTHKRRLNALGPGGLSRERAGLEVRDVHPSHYGRMCPIETPEGPNIGLIGSLSSYARVNPFGFIETPYRRVVDGQITDEVEYFTADEEDRHVIAQANTPFDADMKFTEDQIEVRLRGGDVEVVPASQVDYMDVSPRQMVSVATAMIPFLEHDDANRALMGANMQRQAVPLLRAEAPYVGTGIEQRAAYDAGDLIIAPKAGVVEYVSADYITIMDDEGIRDTFMLRKFERTNQGTSYNQKPLVNQGDRVEAGQVIADGPGTDNGEMALGKNLLVAFMPWEGHNYEDAIILSQRMVEEDVLTSIHIEEYEIDARDTKLGPEEITRDIPNVGEDVLADLDERGIVRIGADVRDGDILVGKVTPKGETELTPEERLLRAIFGEKAREVRDTSMKVPHGETGKVIGVRVFSREDDDDLAAGVNEMVRVYVAQKRKIQDGDKLAGRHGNKGVVGKILPQEDMPFLPDGTPVDIILNTHGVPRRMNIGQVLEVHLGWLAKAGWQVDTNSDDPKIKAMLETLPEDLYDVPADSLTSTPVFDGASNAELSGLLRSSRPDRDGIRLVDDFGKAQLIDGRTGEPYEHPISVGYMYMLKLHHLVDEKIHARSTGPYSMITQQPLGGKAQFGGQRFGEMEVWAMQAYGAAYTLQELLTIKSDDVVGRVKVYEAIVKGENIPDPGIPESFKVLLKELQSLCLNVEVLAADGTPMELSSDDDDELESANAALGINLQRDERPDADIDVG</sequence>
<keyword id="KW-0240">DNA-directed RNA polymerase</keyword>
<keyword id="KW-0548">Nucleotidyltransferase</keyword>
<keyword id="KW-1185">Reference proteome</keyword>
<keyword id="KW-0804">Transcription</keyword>
<keyword id="KW-0808">Transferase</keyword>
<feature type="chain" id="PRO_1000141681" description="DNA-directed RNA polymerase subunit beta">
    <location>
        <begin position="1"/>
        <end position="1170"/>
    </location>
</feature>
<dbReference type="EC" id="2.7.7.6" evidence="1"/>
<dbReference type="EMBL" id="AM942444">
    <property type="protein sequence ID" value="CAQ04260.1"/>
    <property type="molecule type" value="Genomic_DNA"/>
</dbReference>
<dbReference type="RefSeq" id="WP_012359561.1">
    <property type="nucleotide sequence ID" value="NC_010545.1"/>
</dbReference>
<dbReference type="SMR" id="B1VES1"/>
<dbReference type="STRING" id="504474.cu0300"/>
<dbReference type="GeneID" id="60605103"/>
<dbReference type="KEGG" id="cur:cu0300"/>
<dbReference type="eggNOG" id="COG0085">
    <property type="taxonomic scope" value="Bacteria"/>
</dbReference>
<dbReference type="HOGENOM" id="CLU_000524_4_1_11"/>
<dbReference type="Proteomes" id="UP000001727">
    <property type="component" value="Chromosome"/>
</dbReference>
<dbReference type="GO" id="GO:0000428">
    <property type="term" value="C:DNA-directed RNA polymerase complex"/>
    <property type="evidence" value="ECO:0007669"/>
    <property type="project" value="UniProtKB-KW"/>
</dbReference>
<dbReference type="GO" id="GO:0003677">
    <property type="term" value="F:DNA binding"/>
    <property type="evidence" value="ECO:0007669"/>
    <property type="project" value="UniProtKB-UniRule"/>
</dbReference>
<dbReference type="GO" id="GO:0003899">
    <property type="term" value="F:DNA-directed RNA polymerase activity"/>
    <property type="evidence" value="ECO:0007669"/>
    <property type="project" value="UniProtKB-UniRule"/>
</dbReference>
<dbReference type="GO" id="GO:0032549">
    <property type="term" value="F:ribonucleoside binding"/>
    <property type="evidence" value="ECO:0007669"/>
    <property type="project" value="InterPro"/>
</dbReference>
<dbReference type="GO" id="GO:0006351">
    <property type="term" value="P:DNA-templated transcription"/>
    <property type="evidence" value="ECO:0007669"/>
    <property type="project" value="UniProtKB-UniRule"/>
</dbReference>
<dbReference type="CDD" id="cd00653">
    <property type="entry name" value="RNA_pol_B_RPB2"/>
    <property type="match status" value="1"/>
</dbReference>
<dbReference type="Gene3D" id="2.40.50.100">
    <property type="match status" value="1"/>
</dbReference>
<dbReference type="Gene3D" id="2.40.50.150">
    <property type="match status" value="1"/>
</dbReference>
<dbReference type="Gene3D" id="3.90.1100.10">
    <property type="match status" value="1"/>
</dbReference>
<dbReference type="Gene3D" id="2.30.150.10">
    <property type="entry name" value="DNA-directed RNA polymerase, beta subunit, external 1 domain"/>
    <property type="match status" value="1"/>
</dbReference>
<dbReference type="Gene3D" id="2.40.270.10">
    <property type="entry name" value="DNA-directed RNA polymerase, subunit 2, domain 6"/>
    <property type="match status" value="1"/>
</dbReference>
<dbReference type="Gene3D" id="3.90.1800.10">
    <property type="entry name" value="RNA polymerase alpha subunit dimerisation domain"/>
    <property type="match status" value="1"/>
</dbReference>
<dbReference type="Gene3D" id="3.90.1110.10">
    <property type="entry name" value="RNA polymerase Rpb2, domain 2"/>
    <property type="match status" value="1"/>
</dbReference>
<dbReference type="HAMAP" id="MF_01321">
    <property type="entry name" value="RNApol_bact_RpoB"/>
    <property type="match status" value="1"/>
</dbReference>
<dbReference type="InterPro" id="IPR042107">
    <property type="entry name" value="DNA-dir_RNA_pol_bsu_ext_1_sf"/>
</dbReference>
<dbReference type="InterPro" id="IPR019462">
    <property type="entry name" value="DNA-dir_RNA_pol_bsu_external_1"/>
</dbReference>
<dbReference type="InterPro" id="IPR015712">
    <property type="entry name" value="DNA-dir_RNA_pol_su2"/>
</dbReference>
<dbReference type="InterPro" id="IPR007120">
    <property type="entry name" value="DNA-dir_RNAP_su2_dom"/>
</dbReference>
<dbReference type="InterPro" id="IPR037033">
    <property type="entry name" value="DNA-dir_RNAP_su2_hyb_sf"/>
</dbReference>
<dbReference type="InterPro" id="IPR010243">
    <property type="entry name" value="RNA_pol_bsu_bac"/>
</dbReference>
<dbReference type="InterPro" id="IPR007121">
    <property type="entry name" value="RNA_pol_bsu_CS"/>
</dbReference>
<dbReference type="InterPro" id="IPR007644">
    <property type="entry name" value="RNA_pol_bsu_protrusion"/>
</dbReference>
<dbReference type="InterPro" id="IPR007642">
    <property type="entry name" value="RNA_pol_Rpb2_2"/>
</dbReference>
<dbReference type="InterPro" id="IPR037034">
    <property type="entry name" value="RNA_pol_Rpb2_2_sf"/>
</dbReference>
<dbReference type="InterPro" id="IPR007645">
    <property type="entry name" value="RNA_pol_Rpb2_3"/>
</dbReference>
<dbReference type="InterPro" id="IPR007641">
    <property type="entry name" value="RNA_pol_Rpb2_7"/>
</dbReference>
<dbReference type="InterPro" id="IPR014724">
    <property type="entry name" value="RNA_pol_RPB2_OB-fold"/>
</dbReference>
<dbReference type="NCBIfam" id="NF001616">
    <property type="entry name" value="PRK00405.1"/>
    <property type="match status" value="1"/>
</dbReference>
<dbReference type="NCBIfam" id="TIGR02013">
    <property type="entry name" value="rpoB"/>
    <property type="match status" value="1"/>
</dbReference>
<dbReference type="PANTHER" id="PTHR20856">
    <property type="entry name" value="DNA-DIRECTED RNA POLYMERASE I SUBUNIT 2"/>
    <property type="match status" value="1"/>
</dbReference>
<dbReference type="Pfam" id="PF04563">
    <property type="entry name" value="RNA_pol_Rpb2_1"/>
    <property type="match status" value="1"/>
</dbReference>
<dbReference type="Pfam" id="PF04561">
    <property type="entry name" value="RNA_pol_Rpb2_2"/>
    <property type="match status" value="1"/>
</dbReference>
<dbReference type="Pfam" id="PF04565">
    <property type="entry name" value="RNA_pol_Rpb2_3"/>
    <property type="match status" value="1"/>
</dbReference>
<dbReference type="Pfam" id="PF10385">
    <property type="entry name" value="RNA_pol_Rpb2_45"/>
    <property type="match status" value="1"/>
</dbReference>
<dbReference type="Pfam" id="PF00562">
    <property type="entry name" value="RNA_pol_Rpb2_6"/>
    <property type="match status" value="1"/>
</dbReference>
<dbReference type="Pfam" id="PF04560">
    <property type="entry name" value="RNA_pol_Rpb2_7"/>
    <property type="match status" value="1"/>
</dbReference>
<dbReference type="SUPFAM" id="SSF64484">
    <property type="entry name" value="beta and beta-prime subunits of DNA dependent RNA-polymerase"/>
    <property type="match status" value="1"/>
</dbReference>
<dbReference type="PROSITE" id="PS01166">
    <property type="entry name" value="RNA_POL_BETA"/>
    <property type="match status" value="1"/>
</dbReference>
<evidence type="ECO:0000255" key="1">
    <source>
        <dbReference type="HAMAP-Rule" id="MF_01321"/>
    </source>
</evidence>
<proteinExistence type="inferred from homology"/>
<gene>
    <name evidence="1" type="primary">rpoB</name>
    <name type="ordered locus">cu0300</name>
</gene>
<reference key="1">
    <citation type="journal article" date="2008" name="J. Biotechnol.">
        <title>The lifestyle of Corynebacterium urealyticum derived from its complete genome sequence established by pyrosequencing.</title>
        <authorList>
            <person name="Tauch A."/>
            <person name="Trost E."/>
            <person name="Tilker A."/>
            <person name="Ludewig U."/>
            <person name="Schneiker S."/>
            <person name="Goesmann A."/>
            <person name="Arnold W."/>
            <person name="Bekel T."/>
            <person name="Brinkrolf K."/>
            <person name="Brune I."/>
            <person name="Goetker S."/>
            <person name="Kalinowski J."/>
            <person name="Kamp P.-B."/>
            <person name="Lobo F.P."/>
            <person name="Viehoever P."/>
            <person name="Weisshaar B."/>
            <person name="Soriano F."/>
            <person name="Droege M."/>
            <person name="Puehler A."/>
        </authorList>
    </citation>
    <scope>NUCLEOTIDE SEQUENCE [LARGE SCALE GENOMIC DNA]</scope>
    <source>
        <strain>ATCC 43042 / DSM 7109</strain>
    </source>
</reference>
<name>RPOB_CORU7</name>
<organism>
    <name type="scientific">Corynebacterium urealyticum (strain ATCC 43042 / DSM 7109)</name>
    <dbReference type="NCBI Taxonomy" id="504474"/>
    <lineage>
        <taxon>Bacteria</taxon>
        <taxon>Bacillati</taxon>
        <taxon>Actinomycetota</taxon>
        <taxon>Actinomycetes</taxon>
        <taxon>Mycobacteriales</taxon>
        <taxon>Corynebacteriaceae</taxon>
        <taxon>Corynebacterium</taxon>
    </lineage>
</organism>
<protein>
    <recommendedName>
        <fullName evidence="1">DNA-directed RNA polymerase subunit beta</fullName>
        <shortName evidence="1">RNAP subunit beta</shortName>
        <ecNumber evidence="1">2.7.7.6</ecNumber>
    </recommendedName>
    <alternativeName>
        <fullName evidence="1">RNA polymerase subunit beta</fullName>
    </alternativeName>
    <alternativeName>
        <fullName evidence="1">Transcriptase subunit beta</fullName>
    </alternativeName>
</protein>
<accession>B1VES1</accession>
<comment type="function">
    <text evidence="1">DNA-dependent RNA polymerase catalyzes the transcription of DNA into RNA using the four ribonucleoside triphosphates as substrates.</text>
</comment>
<comment type="catalytic activity">
    <reaction evidence="1">
        <text>RNA(n) + a ribonucleoside 5'-triphosphate = RNA(n+1) + diphosphate</text>
        <dbReference type="Rhea" id="RHEA:21248"/>
        <dbReference type="Rhea" id="RHEA-COMP:14527"/>
        <dbReference type="Rhea" id="RHEA-COMP:17342"/>
        <dbReference type="ChEBI" id="CHEBI:33019"/>
        <dbReference type="ChEBI" id="CHEBI:61557"/>
        <dbReference type="ChEBI" id="CHEBI:140395"/>
        <dbReference type="EC" id="2.7.7.6"/>
    </reaction>
</comment>
<comment type="subunit">
    <text evidence="1">The RNAP catalytic core consists of 2 alpha, 1 beta, 1 beta' and 1 omega subunit. When a sigma factor is associated with the core the holoenzyme is formed, which can initiate transcription.</text>
</comment>
<comment type="similarity">
    <text evidence="1">Belongs to the RNA polymerase beta chain family.</text>
</comment>